<accession>Q8CP85</accession>
<organism>
    <name type="scientific">Staphylococcus epidermidis (strain ATCC 12228 / FDA PCI 1200)</name>
    <dbReference type="NCBI Taxonomy" id="176280"/>
    <lineage>
        <taxon>Bacteria</taxon>
        <taxon>Bacillati</taxon>
        <taxon>Bacillota</taxon>
        <taxon>Bacilli</taxon>
        <taxon>Bacillales</taxon>
        <taxon>Staphylococcaceae</taxon>
        <taxon>Staphylococcus</taxon>
    </lineage>
</organism>
<evidence type="ECO:0000255" key="1"/>
<evidence type="ECO:0000305" key="2"/>
<reference key="1">
    <citation type="journal article" date="2003" name="Mol. Microbiol.">
        <title>Genome-based analysis of virulence genes in a non-biofilm-forming Staphylococcus epidermidis strain (ATCC 12228).</title>
        <authorList>
            <person name="Zhang Y.-Q."/>
            <person name="Ren S.-X."/>
            <person name="Li H.-L."/>
            <person name="Wang Y.-X."/>
            <person name="Fu G."/>
            <person name="Yang J."/>
            <person name="Qin Z.-Q."/>
            <person name="Miao Y.-G."/>
            <person name="Wang W.-Y."/>
            <person name="Chen R.-S."/>
            <person name="Shen Y."/>
            <person name="Chen Z."/>
            <person name="Yuan Z.-H."/>
            <person name="Zhao G.-P."/>
            <person name="Qu D."/>
            <person name="Danchin A."/>
            <person name="Wen Y.-M."/>
        </authorList>
    </citation>
    <scope>NUCLEOTIDE SEQUENCE [LARGE SCALE GENOMIC DNA]</scope>
    <source>
        <strain>ATCC 12228 / FDA PCI 1200</strain>
    </source>
</reference>
<comment type="similarity">
    <text evidence="2">Belongs to the CbbQ/NirQ/NorQ/GpvN family.</text>
</comment>
<protein>
    <recommendedName>
        <fullName>Uncharacterized protein SE_1092</fullName>
    </recommendedName>
</protein>
<feature type="chain" id="PRO_0000284814" description="Uncharacterized protein SE_1092">
    <location>
        <begin position="1"/>
        <end position="263"/>
    </location>
</feature>
<feature type="binding site" evidence="1">
    <location>
        <begin position="31"/>
        <end position="38"/>
    </location>
    <ligand>
        <name>ATP</name>
        <dbReference type="ChEBI" id="CHEBI:30616"/>
    </ligand>
</feature>
<sequence>MVQTVYKNSDQTVFEDAKALFQLNKNILLKGPTGSGKTKLAETLSNVMKLPMHQVNCSVDLDTESLLGFKTIHTNEEGHQEIVFIDGPVIKAMKEGHILYIDEINMAKPETLPILNGVLDYRRQLTNPYTGEVIKAAPGFNVIAAINEGYVGTLPMNEALKNRFIVIEVDYIDGDILKTVIKEQSKLQDEQLIQHIVKFNEDLRTMTKQGQISEEAASIRALIDLSDLATVMPIERAVQRTIIDKLEDEREQQAILNAIELNF</sequence>
<keyword id="KW-0067">ATP-binding</keyword>
<keyword id="KW-0547">Nucleotide-binding</keyword>
<name>Y1092_STAES</name>
<proteinExistence type="inferred from homology"/>
<gene>
    <name type="ordered locus">SE_1092</name>
</gene>
<dbReference type="EMBL" id="AE015929">
    <property type="protein sequence ID" value="AAO04689.1"/>
    <property type="molecule type" value="Genomic_DNA"/>
</dbReference>
<dbReference type="RefSeq" id="NP_764647.1">
    <property type="nucleotide sequence ID" value="NC_004461.1"/>
</dbReference>
<dbReference type="RefSeq" id="WP_001831311.1">
    <property type="nucleotide sequence ID" value="NZ_WBME01000002.1"/>
</dbReference>
<dbReference type="SMR" id="Q8CP85"/>
<dbReference type="DNASU" id="1057800"/>
<dbReference type="KEGG" id="sep:SE_1092"/>
<dbReference type="PATRIC" id="fig|176280.10.peg.1068"/>
<dbReference type="eggNOG" id="COG0714">
    <property type="taxonomic scope" value="Bacteria"/>
</dbReference>
<dbReference type="HOGENOM" id="CLU_080347_0_0_9"/>
<dbReference type="OrthoDB" id="9808317at2"/>
<dbReference type="Proteomes" id="UP000001411">
    <property type="component" value="Chromosome"/>
</dbReference>
<dbReference type="GO" id="GO:0005524">
    <property type="term" value="F:ATP binding"/>
    <property type="evidence" value="ECO:0007669"/>
    <property type="project" value="UniProtKB-KW"/>
</dbReference>
<dbReference type="GO" id="GO:0016887">
    <property type="term" value="F:ATP hydrolysis activity"/>
    <property type="evidence" value="ECO:0007669"/>
    <property type="project" value="InterPro"/>
</dbReference>
<dbReference type="CDD" id="cd00009">
    <property type="entry name" value="AAA"/>
    <property type="match status" value="1"/>
</dbReference>
<dbReference type="Gene3D" id="3.40.50.300">
    <property type="entry name" value="P-loop containing nucleotide triphosphate hydrolases"/>
    <property type="match status" value="1"/>
</dbReference>
<dbReference type="InterPro" id="IPR003593">
    <property type="entry name" value="AAA+_ATPase"/>
</dbReference>
<dbReference type="InterPro" id="IPR011704">
    <property type="entry name" value="ATPase_dyneun-rel_AAA"/>
</dbReference>
<dbReference type="InterPro" id="IPR050764">
    <property type="entry name" value="CbbQ/NirQ/NorQ/GpvN"/>
</dbReference>
<dbReference type="InterPro" id="IPR013615">
    <property type="entry name" value="CbbQ_C"/>
</dbReference>
<dbReference type="InterPro" id="IPR001270">
    <property type="entry name" value="ClpA/B"/>
</dbReference>
<dbReference type="InterPro" id="IPR027417">
    <property type="entry name" value="P-loop_NTPase"/>
</dbReference>
<dbReference type="PANTHER" id="PTHR42759:SF1">
    <property type="entry name" value="MAGNESIUM-CHELATASE SUBUNIT CHLD"/>
    <property type="match status" value="1"/>
</dbReference>
<dbReference type="PANTHER" id="PTHR42759">
    <property type="entry name" value="MOXR FAMILY PROTEIN"/>
    <property type="match status" value="1"/>
</dbReference>
<dbReference type="Pfam" id="PF07728">
    <property type="entry name" value="AAA_5"/>
    <property type="match status" value="1"/>
</dbReference>
<dbReference type="Pfam" id="PF08406">
    <property type="entry name" value="CbbQ_C"/>
    <property type="match status" value="1"/>
</dbReference>
<dbReference type="PRINTS" id="PR00300">
    <property type="entry name" value="CLPPROTEASEA"/>
</dbReference>
<dbReference type="SMART" id="SM00382">
    <property type="entry name" value="AAA"/>
    <property type="match status" value="1"/>
</dbReference>
<dbReference type="SUPFAM" id="SSF52540">
    <property type="entry name" value="P-loop containing nucleoside triphosphate hydrolases"/>
    <property type="match status" value="1"/>
</dbReference>